<evidence type="ECO:0000255" key="1">
    <source>
        <dbReference type="HAMAP-Rule" id="MF_00808"/>
    </source>
</evidence>
<protein>
    <recommendedName>
        <fullName evidence="1">Photosystem II reaction center protein T</fullName>
        <shortName evidence="1">PSII-T</shortName>
    </recommendedName>
</protein>
<sequence length="35" mass="3946">MEALVYTFLLVSTLGIIFFAIFFREPPKLPTKGGK</sequence>
<organism>
    <name type="scientific">Pinus thunbergii</name>
    <name type="common">Japanese black pine</name>
    <name type="synonym">Pinus thunbergiana</name>
    <dbReference type="NCBI Taxonomy" id="3350"/>
    <lineage>
        <taxon>Eukaryota</taxon>
        <taxon>Viridiplantae</taxon>
        <taxon>Streptophyta</taxon>
        <taxon>Embryophyta</taxon>
        <taxon>Tracheophyta</taxon>
        <taxon>Spermatophyta</taxon>
        <taxon>Pinopsida</taxon>
        <taxon>Pinidae</taxon>
        <taxon>Conifers I</taxon>
        <taxon>Pinales</taxon>
        <taxon>Pinaceae</taxon>
        <taxon>Pinus</taxon>
        <taxon>Pinus subgen. Pinus</taxon>
    </lineage>
</organism>
<dbReference type="EMBL" id="D17510">
    <property type="protein sequence ID" value="BAA04387.1"/>
    <property type="molecule type" value="Genomic_DNA"/>
</dbReference>
<dbReference type="PIR" id="T07509">
    <property type="entry name" value="T07509"/>
</dbReference>
<dbReference type="RefSeq" id="NP_042430.1">
    <property type="nucleotide sequence ID" value="NC_001631.1"/>
</dbReference>
<dbReference type="SMR" id="P41625"/>
<dbReference type="GeneID" id="809071"/>
<dbReference type="GO" id="GO:0009535">
    <property type="term" value="C:chloroplast thylakoid membrane"/>
    <property type="evidence" value="ECO:0007669"/>
    <property type="project" value="UniProtKB-SubCell"/>
</dbReference>
<dbReference type="GO" id="GO:0009539">
    <property type="term" value="C:photosystem II reaction center"/>
    <property type="evidence" value="ECO:0007669"/>
    <property type="project" value="InterPro"/>
</dbReference>
<dbReference type="GO" id="GO:0015979">
    <property type="term" value="P:photosynthesis"/>
    <property type="evidence" value="ECO:0007669"/>
    <property type="project" value="UniProtKB-UniRule"/>
</dbReference>
<dbReference type="HAMAP" id="MF_00808">
    <property type="entry name" value="PSII_PsbT"/>
    <property type="match status" value="1"/>
</dbReference>
<dbReference type="InterPro" id="IPR001743">
    <property type="entry name" value="PSII_PsbT"/>
</dbReference>
<dbReference type="InterPro" id="IPR037268">
    <property type="entry name" value="PSII_PsbT_sf"/>
</dbReference>
<dbReference type="PANTHER" id="PTHR36411">
    <property type="match status" value="1"/>
</dbReference>
<dbReference type="PANTHER" id="PTHR36411:SF2">
    <property type="entry name" value="PHOTOSYSTEM II REACTION CENTER PROTEIN T"/>
    <property type="match status" value="1"/>
</dbReference>
<dbReference type="Pfam" id="PF01405">
    <property type="entry name" value="PsbT"/>
    <property type="match status" value="1"/>
</dbReference>
<dbReference type="SUPFAM" id="SSF161029">
    <property type="entry name" value="Photosystem II reaction center protein T, PsbT"/>
    <property type="match status" value="1"/>
</dbReference>
<reference key="1">
    <citation type="journal article" date="1994" name="Proc. Natl. Acad. Sci. U.S.A.">
        <title>Loss of all ndh genes as determined by sequencing the entire chloroplast genome of the black pine Pinus thunbergii.</title>
        <authorList>
            <person name="Wakasugi T."/>
            <person name="Tsudzuki J."/>
            <person name="Ito S."/>
            <person name="Nakashima K."/>
            <person name="Tsudzuki T."/>
            <person name="Sugiura M."/>
        </authorList>
    </citation>
    <scope>NUCLEOTIDE SEQUENCE [LARGE SCALE GENOMIC DNA]</scope>
</reference>
<name>PSBT_PINTH</name>
<gene>
    <name evidence="1" type="primary">psbT</name>
    <name type="synonym">ycf8</name>
</gene>
<geneLocation type="chloroplast"/>
<accession>P41625</accession>
<proteinExistence type="inferred from homology"/>
<keyword id="KW-0150">Chloroplast</keyword>
<keyword id="KW-0472">Membrane</keyword>
<keyword id="KW-0602">Photosynthesis</keyword>
<keyword id="KW-0604">Photosystem II</keyword>
<keyword id="KW-0934">Plastid</keyword>
<keyword id="KW-0793">Thylakoid</keyword>
<keyword id="KW-0812">Transmembrane</keyword>
<keyword id="KW-1133">Transmembrane helix</keyword>
<comment type="function">
    <text evidence="1">Found at the monomer-monomer interface of the photosystem II (PS II) dimer, plays a role in assembly and dimerization of PSII. PSII is a light-driven water plastoquinone oxidoreductase, using light energy to abstract electrons from H(2)O, generating a proton gradient subsequently used for ATP formation.</text>
</comment>
<comment type="subunit">
    <text evidence="1">PSII is composed of 1 copy each of membrane proteins PsbA, PsbB, PsbC, PsbD, PsbE, PsbF, PsbH, PsbI, PsbJ, PsbK, PsbL, PsbM, PsbT, PsbY, PsbZ, Psb30/Ycf12, at least 3 peripheral proteins of the oxygen-evolving complex and a large number of cofactors. It forms dimeric complexes.</text>
</comment>
<comment type="subcellular location">
    <subcellularLocation>
        <location evidence="1">Plastid</location>
        <location evidence="1">Chloroplast thylakoid membrane</location>
        <topology evidence="1">Single-pass membrane protein</topology>
    </subcellularLocation>
</comment>
<comment type="similarity">
    <text evidence="1">Belongs to the PsbT family.</text>
</comment>
<feature type="chain" id="PRO_0000217969" description="Photosystem II reaction center protein T">
    <location>
        <begin position="1"/>
        <end position="35"/>
    </location>
</feature>
<feature type="transmembrane region" description="Helical" evidence="1">
    <location>
        <begin position="3"/>
        <end position="23"/>
    </location>
</feature>